<protein>
    <recommendedName>
        <fullName evidence="1">Protease HtpX</fullName>
        <ecNumber evidence="1">3.4.24.-</ecNumber>
    </recommendedName>
    <alternativeName>
        <fullName evidence="1">Heat shock protein HtpX</fullName>
    </alternativeName>
</protein>
<dbReference type="EC" id="3.4.24.-" evidence="1"/>
<dbReference type="EMBL" id="AM039952">
    <property type="protein sequence ID" value="CAJ24273.1"/>
    <property type="molecule type" value="Genomic_DNA"/>
</dbReference>
<dbReference type="RefSeq" id="WP_011347743.1">
    <property type="nucleotide sequence ID" value="NZ_CP017190.1"/>
</dbReference>
<dbReference type="SMR" id="Q3BSD6"/>
<dbReference type="STRING" id="456327.BJD11_09915"/>
<dbReference type="MEROPS" id="M48.002"/>
<dbReference type="KEGG" id="xcv:XCV2596"/>
<dbReference type="eggNOG" id="COG0501">
    <property type="taxonomic scope" value="Bacteria"/>
</dbReference>
<dbReference type="HOGENOM" id="CLU_042266_1_0_6"/>
<dbReference type="Proteomes" id="UP000007069">
    <property type="component" value="Chromosome"/>
</dbReference>
<dbReference type="GO" id="GO:0005886">
    <property type="term" value="C:plasma membrane"/>
    <property type="evidence" value="ECO:0007669"/>
    <property type="project" value="UniProtKB-SubCell"/>
</dbReference>
<dbReference type="GO" id="GO:0004222">
    <property type="term" value="F:metalloendopeptidase activity"/>
    <property type="evidence" value="ECO:0007669"/>
    <property type="project" value="UniProtKB-UniRule"/>
</dbReference>
<dbReference type="GO" id="GO:0008270">
    <property type="term" value="F:zinc ion binding"/>
    <property type="evidence" value="ECO:0007669"/>
    <property type="project" value="UniProtKB-UniRule"/>
</dbReference>
<dbReference type="GO" id="GO:0006508">
    <property type="term" value="P:proteolysis"/>
    <property type="evidence" value="ECO:0007669"/>
    <property type="project" value="UniProtKB-KW"/>
</dbReference>
<dbReference type="CDD" id="cd07335">
    <property type="entry name" value="M48B_HtpX_like"/>
    <property type="match status" value="1"/>
</dbReference>
<dbReference type="Gene3D" id="3.30.2010.10">
    <property type="entry name" value="Metalloproteases ('zincins'), catalytic domain"/>
    <property type="match status" value="1"/>
</dbReference>
<dbReference type="HAMAP" id="MF_00188">
    <property type="entry name" value="Pept_M48_protease_HtpX"/>
    <property type="match status" value="1"/>
</dbReference>
<dbReference type="InterPro" id="IPR050083">
    <property type="entry name" value="HtpX_protease"/>
</dbReference>
<dbReference type="InterPro" id="IPR022919">
    <property type="entry name" value="Pept_M48_protease_HtpX"/>
</dbReference>
<dbReference type="InterPro" id="IPR001915">
    <property type="entry name" value="Peptidase_M48"/>
</dbReference>
<dbReference type="NCBIfam" id="NF003965">
    <property type="entry name" value="PRK05457.1"/>
    <property type="match status" value="1"/>
</dbReference>
<dbReference type="PANTHER" id="PTHR43221">
    <property type="entry name" value="PROTEASE HTPX"/>
    <property type="match status" value="1"/>
</dbReference>
<dbReference type="PANTHER" id="PTHR43221:SF1">
    <property type="entry name" value="PROTEASE HTPX"/>
    <property type="match status" value="1"/>
</dbReference>
<dbReference type="Pfam" id="PF01435">
    <property type="entry name" value="Peptidase_M48"/>
    <property type="match status" value="1"/>
</dbReference>
<organism>
    <name type="scientific">Xanthomonas euvesicatoria pv. vesicatoria (strain 85-10)</name>
    <name type="common">Xanthomonas campestris pv. vesicatoria</name>
    <dbReference type="NCBI Taxonomy" id="316273"/>
    <lineage>
        <taxon>Bacteria</taxon>
        <taxon>Pseudomonadati</taxon>
        <taxon>Pseudomonadota</taxon>
        <taxon>Gammaproteobacteria</taxon>
        <taxon>Lysobacterales</taxon>
        <taxon>Lysobacteraceae</taxon>
        <taxon>Xanthomonas</taxon>
    </lineage>
</organism>
<evidence type="ECO:0000255" key="1">
    <source>
        <dbReference type="HAMAP-Rule" id="MF_00188"/>
    </source>
</evidence>
<name>HTPX_XANE5</name>
<feature type="chain" id="PRO_1000020968" description="Protease HtpX">
    <location>
        <begin position="1"/>
        <end position="292"/>
    </location>
</feature>
<feature type="transmembrane region" description="Helical" evidence="1">
    <location>
        <begin position="5"/>
        <end position="25"/>
    </location>
</feature>
<feature type="transmembrane region" description="Helical" evidence="1">
    <location>
        <begin position="34"/>
        <end position="54"/>
    </location>
</feature>
<feature type="transmembrane region" description="Helical" evidence="1">
    <location>
        <begin position="155"/>
        <end position="175"/>
    </location>
</feature>
<feature type="transmembrane region" description="Helical" evidence="1">
    <location>
        <begin position="193"/>
        <end position="213"/>
    </location>
</feature>
<feature type="active site" evidence="1">
    <location>
        <position position="141"/>
    </location>
</feature>
<feature type="binding site" evidence="1">
    <location>
        <position position="140"/>
    </location>
    <ligand>
        <name>Zn(2+)</name>
        <dbReference type="ChEBI" id="CHEBI:29105"/>
        <note>catalytic</note>
    </ligand>
</feature>
<feature type="binding site" evidence="1">
    <location>
        <position position="144"/>
    </location>
    <ligand>
        <name>Zn(2+)</name>
        <dbReference type="ChEBI" id="CHEBI:29105"/>
        <note>catalytic</note>
    </ligand>
</feature>
<feature type="binding site" evidence="1">
    <location>
        <position position="218"/>
    </location>
    <ligand>
        <name>Zn(2+)</name>
        <dbReference type="ChEBI" id="CHEBI:29105"/>
        <note>catalytic</note>
    </ligand>
</feature>
<comment type="cofactor">
    <cofactor evidence="1">
        <name>Zn(2+)</name>
        <dbReference type="ChEBI" id="CHEBI:29105"/>
    </cofactor>
    <text evidence="1">Binds 1 zinc ion per subunit.</text>
</comment>
<comment type="subcellular location">
    <subcellularLocation>
        <location evidence="1">Cell inner membrane</location>
        <topology evidence="1">Multi-pass membrane protein</topology>
    </subcellularLocation>
</comment>
<comment type="similarity">
    <text evidence="1">Belongs to the peptidase M48B family.</text>
</comment>
<proteinExistence type="inferred from homology"/>
<accession>Q3BSD6</accession>
<gene>
    <name evidence="1" type="primary">htpX</name>
    <name type="ordered locus">XCV2596</name>
</gene>
<reference key="1">
    <citation type="journal article" date="2005" name="J. Bacteriol.">
        <title>Insights into genome plasticity and pathogenicity of the plant pathogenic Bacterium Xanthomonas campestris pv. vesicatoria revealed by the complete genome sequence.</title>
        <authorList>
            <person name="Thieme F."/>
            <person name="Koebnik R."/>
            <person name="Bekel T."/>
            <person name="Berger C."/>
            <person name="Boch J."/>
            <person name="Buettner D."/>
            <person name="Caldana C."/>
            <person name="Gaigalat L."/>
            <person name="Goesmann A."/>
            <person name="Kay S."/>
            <person name="Kirchner O."/>
            <person name="Lanz C."/>
            <person name="Linke B."/>
            <person name="McHardy A.C."/>
            <person name="Meyer F."/>
            <person name="Mittenhuber G."/>
            <person name="Nies D.H."/>
            <person name="Niesbach-Kloesgen U."/>
            <person name="Patschkowski T."/>
            <person name="Rueckert C."/>
            <person name="Rupp O."/>
            <person name="Schneiker S."/>
            <person name="Schuster S.C."/>
            <person name="Vorhoelter F.J."/>
            <person name="Weber E."/>
            <person name="Puehler A."/>
            <person name="Bonas U."/>
            <person name="Bartels D."/>
            <person name="Kaiser O."/>
        </authorList>
    </citation>
    <scope>NUCLEOTIDE SEQUENCE [LARGE SCALE GENOMIC DNA]</scope>
    <source>
        <strain>85-10</strain>
    </source>
</reference>
<keyword id="KW-0997">Cell inner membrane</keyword>
<keyword id="KW-1003">Cell membrane</keyword>
<keyword id="KW-0378">Hydrolase</keyword>
<keyword id="KW-0472">Membrane</keyword>
<keyword id="KW-0479">Metal-binding</keyword>
<keyword id="KW-0482">Metalloprotease</keyword>
<keyword id="KW-0645">Protease</keyword>
<keyword id="KW-0346">Stress response</keyword>
<keyword id="KW-0812">Transmembrane</keyword>
<keyword id="KW-1133">Transmembrane helix</keyword>
<keyword id="KW-0862">Zinc</keyword>
<sequence length="292" mass="31155">MFNRIFLFLLTNLAVLMLAGIVMSLLGVNPAQMSGLLVMAAIFGFGGSFISLLLSKFMAKRSTGAQVITEPRTPTERWLLETVRRHAQAAGIGMPEVAVYDGPEINAFATGANRNDALVAVSTGLLQNMDQDEAEAVLGHEIAHVANGDMVTMALLQGVLNTFVIVLARVVGGIIDSALSGNREGGRGFAYYIIVFALEMVFGLFATMIAMWFSRRREFRADAGGAQLAGRSKMIAALERLSLNHGQNTLPSQVQAFGISGGVGEGLRRLFLSHPPLTERIAALRAASGSAM</sequence>